<accession>A2RBB7</accession>
<comment type="function">
    <text evidence="1">Component of the Mediator complex, a coactivator involved in the regulated transcription of nearly all RNA polymerase II-dependent genes. Mediator functions as a bridge to convey information from gene-specific regulatory proteins to the basal RNA polymerase II transcription machinery. Mediator is recruited to promoters by direct interactions with regulatory proteins and serves as a scaffold for the assembly of a functional preinitiation complex with RNA polymerase II and the general transcription factors (By similarity).</text>
</comment>
<comment type="subunit">
    <text evidence="1">Component of the Mediator complex.</text>
</comment>
<comment type="subcellular location">
    <subcellularLocation>
        <location evidence="1">Nucleus</location>
    </subcellularLocation>
</comment>
<comment type="similarity">
    <text evidence="3">Belongs to the Mediator complex subunit 18 family.</text>
</comment>
<protein>
    <recommendedName>
        <fullName>Mediator of RNA polymerase II transcription subunit 18</fullName>
    </recommendedName>
    <alternativeName>
        <fullName>Mediator complex subunit 18</fullName>
    </alternativeName>
</protein>
<sequence>MHELLLFASVPAHQHHELLQQLAGLTAMQPRHRLERRLVFKAYRKPGLTNTRVGASQDLQGVELQRLNKMLNGGMFYTQVVGPVAKADFGGNPSSSGDPDVSMSGLEEKPSSSSSSYSYEDQPWKLEFRDIPEAGTRSAVTARLMASATLPKGDITAPMNAWGYSFVTEYVVEGDVFVLNDIVIFLHRVLLYPTGAQESHGPRRQLPAYQELSPLERTGSYVLQAAITVQDGGNQEMMRTASQHLFGLREQLKSAVRLEMADRLSLDTRAK</sequence>
<gene>
    <name type="primary">srb5</name>
    <name type="synonym">med18</name>
    <name type="ORF">An18g06160</name>
</gene>
<reference key="1">
    <citation type="journal article" date="2007" name="Nat. Biotechnol.">
        <title>Genome sequencing and analysis of the versatile cell factory Aspergillus niger CBS 513.88.</title>
        <authorList>
            <person name="Pel H.J."/>
            <person name="de Winde J.H."/>
            <person name="Archer D.B."/>
            <person name="Dyer P.S."/>
            <person name="Hofmann G."/>
            <person name="Schaap P.J."/>
            <person name="Turner G."/>
            <person name="de Vries R.P."/>
            <person name="Albang R."/>
            <person name="Albermann K."/>
            <person name="Andersen M.R."/>
            <person name="Bendtsen J.D."/>
            <person name="Benen J.A.E."/>
            <person name="van den Berg M."/>
            <person name="Breestraat S."/>
            <person name="Caddick M.X."/>
            <person name="Contreras R."/>
            <person name="Cornell M."/>
            <person name="Coutinho P.M."/>
            <person name="Danchin E.G.J."/>
            <person name="Debets A.J.M."/>
            <person name="Dekker P."/>
            <person name="van Dijck P.W.M."/>
            <person name="van Dijk A."/>
            <person name="Dijkhuizen L."/>
            <person name="Driessen A.J.M."/>
            <person name="d'Enfert C."/>
            <person name="Geysens S."/>
            <person name="Goosen C."/>
            <person name="Groot G.S.P."/>
            <person name="de Groot P.W.J."/>
            <person name="Guillemette T."/>
            <person name="Henrissat B."/>
            <person name="Herweijer M."/>
            <person name="van den Hombergh J.P.T.W."/>
            <person name="van den Hondel C.A.M.J.J."/>
            <person name="van der Heijden R.T.J.M."/>
            <person name="van der Kaaij R.M."/>
            <person name="Klis F.M."/>
            <person name="Kools H.J."/>
            <person name="Kubicek C.P."/>
            <person name="van Kuyk P.A."/>
            <person name="Lauber J."/>
            <person name="Lu X."/>
            <person name="van der Maarel M.J.E.C."/>
            <person name="Meulenberg R."/>
            <person name="Menke H."/>
            <person name="Mortimer M.A."/>
            <person name="Nielsen J."/>
            <person name="Oliver S.G."/>
            <person name="Olsthoorn M."/>
            <person name="Pal K."/>
            <person name="van Peij N.N.M.E."/>
            <person name="Ram A.F.J."/>
            <person name="Rinas U."/>
            <person name="Roubos J.A."/>
            <person name="Sagt C.M.J."/>
            <person name="Schmoll M."/>
            <person name="Sun J."/>
            <person name="Ussery D."/>
            <person name="Varga J."/>
            <person name="Vervecken W."/>
            <person name="van de Vondervoort P.J.J."/>
            <person name="Wedler H."/>
            <person name="Woesten H.A.B."/>
            <person name="Zeng A.-P."/>
            <person name="van Ooyen A.J.J."/>
            <person name="Visser J."/>
            <person name="Stam H."/>
        </authorList>
    </citation>
    <scope>NUCLEOTIDE SEQUENCE [LARGE SCALE GENOMIC DNA]</scope>
    <source>
        <strain>ATCC MYA-4892 / CBS 513.88 / FGSC A1513</strain>
    </source>
</reference>
<feature type="chain" id="PRO_0000304755" description="Mediator of RNA polymerase II transcription subunit 18">
    <location>
        <begin position="1"/>
        <end position="271"/>
    </location>
</feature>
<feature type="region of interest" description="Disordered" evidence="2">
    <location>
        <begin position="89"/>
        <end position="119"/>
    </location>
</feature>
<organism>
    <name type="scientific">Aspergillus niger (strain ATCC MYA-4892 / CBS 513.88 / FGSC A1513)</name>
    <dbReference type="NCBI Taxonomy" id="425011"/>
    <lineage>
        <taxon>Eukaryota</taxon>
        <taxon>Fungi</taxon>
        <taxon>Dikarya</taxon>
        <taxon>Ascomycota</taxon>
        <taxon>Pezizomycotina</taxon>
        <taxon>Eurotiomycetes</taxon>
        <taxon>Eurotiomycetidae</taxon>
        <taxon>Eurotiales</taxon>
        <taxon>Aspergillaceae</taxon>
        <taxon>Aspergillus</taxon>
        <taxon>Aspergillus subgen. Circumdati</taxon>
    </lineage>
</organism>
<name>MED18_ASPNC</name>
<dbReference type="EMBL" id="AM270411">
    <property type="protein sequence ID" value="CAK43341.1"/>
    <property type="molecule type" value="Genomic_DNA"/>
</dbReference>
<dbReference type="RefSeq" id="XP_001399069.1">
    <property type="nucleotide sequence ID" value="XM_001399032.2"/>
</dbReference>
<dbReference type="EnsemblFungi" id="CAK43341">
    <property type="protein sequence ID" value="CAK43341"/>
    <property type="gene ID" value="An18g06160"/>
</dbReference>
<dbReference type="GeneID" id="4990184"/>
<dbReference type="KEGG" id="ang:An18g06160"/>
<dbReference type="VEuPathDB" id="FungiDB:An18g06160"/>
<dbReference type="HOGENOM" id="CLU_084516_0_0_1"/>
<dbReference type="Proteomes" id="UP000006706">
    <property type="component" value="Chromosome 8L"/>
</dbReference>
<dbReference type="GO" id="GO:0070847">
    <property type="term" value="C:core mediator complex"/>
    <property type="evidence" value="ECO:0007669"/>
    <property type="project" value="TreeGrafter"/>
</dbReference>
<dbReference type="GO" id="GO:0016592">
    <property type="term" value="C:mediator complex"/>
    <property type="evidence" value="ECO:0007669"/>
    <property type="project" value="InterPro"/>
</dbReference>
<dbReference type="GO" id="GO:0003712">
    <property type="term" value="F:transcription coregulator activity"/>
    <property type="evidence" value="ECO:0007669"/>
    <property type="project" value="InterPro"/>
</dbReference>
<dbReference type="GO" id="GO:0006357">
    <property type="term" value="P:regulation of transcription by RNA polymerase II"/>
    <property type="evidence" value="ECO:0007669"/>
    <property type="project" value="InterPro"/>
</dbReference>
<dbReference type="GO" id="GO:0006369">
    <property type="term" value="P:termination of RNA polymerase II transcription"/>
    <property type="evidence" value="ECO:0007669"/>
    <property type="project" value="TreeGrafter"/>
</dbReference>
<dbReference type="FunFam" id="2.40.320.10:FF:000007">
    <property type="entry name" value="Mediator of RNA polymerase II transcription subunit 18"/>
    <property type="match status" value="1"/>
</dbReference>
<dbReference type="Gene3D" id="2.40.320.10">
    <property type="entry name" value="Hypothetical Protein Pfu-838710-001"/>
    <property type="match status" value="1"/>
</dbReference>
<dbReference type="InterPro" id="IPR019095">
    <property type="entry name" value="Mediator_Med18"/>
</dbReference>
<dbReference type="PANTHER" id="PTHR13321:SF2">
    <property type="entry name" value="MEDIATOR OF RNA POLYMERASE II TRANSCRIPTION SUBUNIT 18"/>
    <property type="match status" value="1"/>
</dbReference>
<dbReference type="PANTHER" id="PTHR13321">
    <property type="entry name" value="MEDIATOR OF RNA POLYMERASE II TRANSCRIPTION, SUBUNIT 18"/>
    <property type="match status" value="1"/>
</dbReference>
<dbReference type="Pfam" id="PF09637">
    <property type="entry name" value="Med18"/>
    <property type="match status" value="1"/>
</dbReference>
<keyword id="KW-0010">Activator</keyword>
<keyword id="KW-0539">Nucleus</keyword>
<keyword id="KW-1185">Reference proteome</keyword>
<keyword id="KW-0804">Transcription</keyword>
<keyword id="KW-0805">Transcription regulation</keyword>
<evidence type="ECO:0000250" key="1"/>
<evidence type="ECO:0000256" key="2">
    <source>
        <dbReference type="SAM" id="MobiDB-lite"/>
    </source>
</evidence>
<evidence type="ECO:0000305" key="3"/>
<proteinExistence type="inferred from homology"/>